<comment type="function">
    <text evidence="1">Catalyzes the transfer of a phosphate group to glutamate to form L-glutamate 5-phosphate.</text>
</comment>
<comment type="catalytic activity">
    <reaction evidence="1">
        <text>L-glutamate + ATP = L-glutamyl 5-phosphate + ADP</text>
        <dbReference type="Rhea" id="RHEA:14877"/>
        <dbReference type="ChEBI" id="CHEBI:29985"/>
        <dbReference type="ChEBI" id="CHEBI:30616"/>
        <dbReference type="ChEBI" id="CHEBI:58274"/>
        <dbReference type="ChEBI" id="CHEBI:456216"/>
        <dbReference type="EC" id="2.7.2.11"/>
    </reaction>
</comment>
<comment type="pathway">
    <text evidence="1">Amino-acid biosynthesis; L-proline biosynthesis; L-glutamate 5-semialdehyde from L-glutamate: step 1/2.</text>
</comment>
<comment type="subcellular location">
    <subcellularLocation>
        <location evidence="1">Cytoplasm</location>
    </subcellularLocation>
</comment>
<comment type="similarity">
    <text evidence="1">Belongs to the glutamate 5-kinase family.</text>
</comment>
<sequence>MSESQTLVVKLGTSVLTGGSRRLNRAHIVELVRQCAQLHAMGHRIVIVTSGAIAAGREHLGYPELPATIASKQLLAAVGQSRLIQLWEQLFSIYGIHVGQMLLTRADMEDRERFLNARDTLRALLDNSIVPVINENDAVATAEIKVGDNDNLSALAAILAGADKLLLLTDQPGLFTADPRSNPQAELIKDVYGIDDALRAIAGDSVSGLGTGGMGTKLQAADVACRAGIDTIIAAGNRPDVIGHAMAGLPVGTCFHAQESPLENRKRWIFGAPPAGEITVDAGATQAILERGSSLLPKGIKIVSGNFSRGEVIRIRNSEGRDIAHGVSRYNSDALRLIAGQHSQQIDAILGYEYGPVAVHRDDMIIR</sequence>
<dbReference type="EC" id="2.7.2.11" evidence="1"/>
<dbReference type="EMBL" id="CP000647">
    <property type="protein sequence ID" value="ABR75733.1"/>
    <property type="molecule type" value="Genomic_DNA"/>
</dbReference>
<dbReference type="RefSeq" id="WP_004144574.1">
    <property type="nucleotide sequence ID" value="NC_009648.1"/>
</dbReference>
<dbReference type="SMR" id="A6T562"/>
<dbReference type="STRING" id="272620.KPN_00281"/>
<dbReference type="jPOST" id="A6T562"/>
<dbReference type="PaxDb" id="272620-KPN_00281"/>
<dbReference type="EnsemblBacteria" id="ABR75733">
    <property type="protein sequence ID" value="ABR75733"/>
    <property type="gene ID" value="KPN_00281"/>
</dbReference>
<dbReference type="KEGG" id="kpn:KPN_00281"/>
<dbReference type="HOGENOM" id="CLU_025400_2_0_6"/>
<dbReference type="UniPathway" id="UPA00098">
    <property type="reaction ID" value="UER00359"/>
</dbReference>
<dbReference type="Proteomes" id="UP000000265">
    <property type="component" value="Chromosome"/>
</dbReference>
<dbReference type="GO" id="GO:0005829">
    <property type="term" value="C:cytosol"/>
    <property type="evidence" value="ECO:0007669"/>
    <property type="project" value="TreeGrafter"/>
</dbReference>
<dbReference type="GO" id="GO:0005524">
    <property type="term" value="F:ATP binding"/>
    <property type="evidence" value="ECO:0007669"/>
    <property type="project" value="UniProtKB-KW"/>
</dbReference>
<dbReference type="GO" id="GO:0004349">
    <property type="term" value="F:glutamate 5-kinase activity"/>
    <property type="evidence" value="ECO:0007669"/>
    <property type="project" value="UniProtKB-UniRule"/>
</dbReference>
<dbReference type="GO" id="GO:0003723">
    <property type="term" value="F:RNA binding"/>
    <property type="evidence" value="ECO:0007669"/>
    <property type="project" value="InterPro"/>
</dbReference>
<dbReference type="GO" id="GO:0055129">
    <property type="term" value="P:L-proline biosynthetic process"/>
    <property type="evidence" value="ECO:0007669"/>
    <property type="project" value="UniProtKB-UniRule"/>
</dbReference>
<dbReference type="CDD" id="cd04242">
    <property type="entry name" value="AAK_G5K_ProB"/>
    <property type="match status" value="1"/>
</dbReference>
<dbReference type="CDD" id="cd21157">
    <property type="entry name" value="PUA_G5K"/>
    <property type="match status" value="1"/>
</dbReference>
<dbReference type="FunFam" id="2.30.130.10:FF:000003">
    <property type="entry name" value="Glutamate 5-kinase"/>
    <property type="match status" value="1"/>
</dbReference>
<dbReference type="FunFam" id="3.40.1160.10:FF:000006">
    <property type="entry name" value="Glutamate 5-kinase"/>
    <property type="match status" value="1"/>
</dbReference>
<dbReference type="Gene3D" id="3.40.1160.10">
    <property type="entry name" value="Acetylglutamate kinase-like"/>
    <property type="match status" value="2"/>
</dbReference>
<dbReference type="Gene3D" id="2.30.130.10">
    <property type="entry name" value="PUA domain"/>
    <property type="match status" value="1"/>
</dbReference>
<dbReference type="HAMAP" id="MF_00456">
    <property type="entry name" value="ProB"/>
    <property type="match status" value="1"/>
</dbReference>
<dbReference type="InterPro" id="IPR036393">
    <property type="entry name" value="AceGlu_kinase-like_sf"/>
</dbReference>
<dbReference type="InterPro" id="IPR001048">
    <property type="entry name" value="Asp/Glu/Uridylate_kinase"/>
</dbReference>
<dbReference type="InterPro" id="IPR041739">
    <property type="entry name" value="G5K_ProB"/>
</dbReference>
<dbReference type="InterPro" id="IPR001057">
    <property type="entry name" value="Glu/AcGlu_kinase"/>
</dbReference>
<dbReference type="InterPro" id="IPR011529">
    <property type="entry name" value="Glu_5kinase"/>
</dbReference>
<dbReference type="InterPro" id="IPR005715">
    <property type="entry name" value="Glu_5kinase/COase_Synthase"/>
</dbReference>
<dbReference type="InterPro" id="IPR019797">
    <property type="entry name" value="Glutamate_5-kinase_CS"/>
</dbReference>
<dbReference type="InterPro" id="IPR002478">
    <property type="entry name" value="PUA"/>
</dbReference>
<dbReference type="InterPro" id="IPR015947">
    <property type="entry name" value="PUA-like_sf"/>
</dbReference>
<dbReference type="InterPro" id="IPR036974">
    <property type="entry name" value="PUA_sf"/>
</dbReference>
<dbReference type="NCBIfam" id="TIGR01027">
    <property type="entry name" value="proB"/>
    <property type="match status" value="1"/>
</dbReference>
<dbReference type="PANTHER" id="PTHR43654">
    <property type="entry name" value="GLUTAMATE 5-KINASE"/>
    <property type="match status" value="1"/>
</dbReference>
<dbReference type="PANTHER" id="PTHR43654:SF1">
    <property type="entry name" value="ISOPENTENYL PHOSPHATE KINASE"/>
    <property type="match status" value="1"/>
</dbReference>
<dbReference type="Pfam" id="PF00696">
    <property type="entry name" value="AA_kinase"/>
    <property type="match status" value="1"/>
</dbReference>
<dbReference type="Pfam" id="PF01472">
    <property type="entry name" value="PUA"/>
    <property type="match status" value="1"/>
</dbReference>
<dbReference type="PIRSF" id="PIRSF000729">
    <property type="entry name" value="GK"/>
    <property type="match status" value="1"/>
</dbReference>
<dbReference type="PRINTS" id="PR00474">
    <property type="entry name" value="GLU5KINASE"/>
</dbReference>
<dbReference type="SMART" id="SM00359">
    <property type="entry name" value="PUA"/>
    <property type="match status" value="1"/>
</dbReference>
<dbReference type="SUPFAM" id="SSF53633">
    <property type="entry name" value="Carbamate kinase-like"/>
    <property type="match status" value="1"/>
</dbReference>
<dbReference type="SUPFAM" id="SSF88697">
    <property type="entry name" value="PUA domain-like"/>
    <property type="match status" value="1"/>
</dbReference>
<dbReference type="PROSITE" id="PS00902">
    <property type="entry name" value="GLUTAMATE_5_KINASE"/>
    <property type="match status" value="1"/>
</dbReference>
<dbReference type="PROSITE" id="PS50890">
    <property type="entry name" value="PUA"/>
    <property type="match status" value="1"/>
</dbReference>
<accession>A6T562</accession>
<reference key="1">
    <citation type="submission" date="2006-09" db="EMBL/GenBank/DDBJ databases">
        <authorList>
            <consortium name="The Klebsiella pneumonia Genome Sequencing Project"/>
            <person name="McClelland M."/>
            <person name="Sanderson E.K."/>
            <person name="Spieth J."/>
            <person name="Clifton W.S."/>
            <person name="Latreille P."/>
            <person name="Sabo A."/>
            <person name="Pepin K."/>
            <person name="Bhonagiri V."/>
            <person name="Porwollik S."/>
            <person name="Ali J."/>
            <person name="Wilson R.K."/>
        </authorList>
    </citation>
    <scope>NUCLEOTIDE SEQUENCE [LARGE SCALE GENOMIC DNA]</scope>
    <source>
        <strain>ATCC 700721 / MGH 78578</strain>
    </source>
</reference>
<organism>
    <name type="scientific">Klebsiella pneumoniae subsp. pneumoniae (strain ATCC 700721 / MGH 78578)</name>
    <dbReference type="NCBI Taxonomy" id="272620"/>
    <lineage>
        <taxon>Bacteria</taxon>
        <taxon>Pseudomonadati</taxon>
        <taxon>Pseudomonadota</taxon>
        <taxon>Gammaproteobacteria</taxon>
        <taxon>Enterobacterales</taxon>
        <taxon>Enterobacteriaceae</taxon>
        <taxon>Klebsiella/Raoultella group</taxon>
        <taxon>Klebsiella</taxon>
        <taxon>Klebsiella pneumoniae complex</taxon>
    </lineage>
</organism>
<proteinExistence type="inferred from homology"/>
<feature type="chain" id="PRO_1000081068" description="Glutamate 5-kinase">
    <location>
        <begin position="1"/>
        <end position="367"/>
    </location>
</feature>
<feature type="domain" description="PUA" evidence="1">
    <location>
        <begin position="275"/>
        <end position="353"/>
    </location>
</feature>
<feature type="binding site" evidence="1">
    <location>
        <position position="10"/>
    </location>
    <ligand>
        <name>ATP</name>
        <dbReference type="ChEBI" id="CHEBI:30616"/>
    </ligand>
</feature>
<feature type="binding site" evidence="1">
    <location>
        <position position="50"/>
    </location>
    <ligand>
        <name>substrate</name>
    </ligand>
</feature>
<feature type="binding site" evidence="1">
    <location>
        <position position="137"/>
    </location>
    <ligand>
        <name>substrate</name>
    </ligand>
</feature>
<feature type="binding site" evidence="1">
    <location>
        <position position="149"/>
    </location>
    <ligand>
        <name>substrate</name>
    </ligand>
</feature>
<feature type="binding site" evidence="1">
    <location>
        <begin position="169"/>
        <end position="170"/>
    </location>
    <ligand>
        <name>ATP</name>
        <dbReference type="ChEBI" id="CHEBI:30616"/>
    </ligand>
</feature>
<feature type="binding site" evidence="1">
    <location>
        <begin position="211"/>
        <end position="217"/>
    </location>
    <ligand>
        <name>ATP</name>
        <dbReference type="ChEBI" id="CHEBI:30616"/>
    </ligand>
</feature>
<name>PROB_KLEP7</name>
<keyword id="KW-0028">Amino-acid biosynthesis</keyword>
<keyword id="KW-0067">ATP-binding</keyword>
<keyword id="KW-0963">Cytoplasm</keyword>
<keyword id="KW-0418">Kinase</keyword>
<keyword id="KW-0547">Nucleotide-binding</keyword>
<keyword id="KW-0641">Proline biosynthesis</keyword>
<keyword id="KW-0808">Transferase</keyword>
<evidence type="ECO:0000255" key="1">
    <source>
        <dbReference type="HAMAP-Rule" id="MF_00456"/>
    </source>
</evidence>
<protein>
    <recommendedName>
        <fullName evidence="1">Glutamate 5-kinase</fullName>
        <ecNumber evidence="1">2.7.2.11</ecNumber>
    </recommendedName>
    <alternativeName>
        <fullName evidence="1">Gamma-glutamyl kinase</fullName>
        <shortName evidence="1">GK</shortName>
    </alternativeName>
</protein>
<gene>
    <name evidence="1" type="primary">proB</name>
    <name type="ordered locus">KPN78578_02720</name>
    <name type="ORF">KPN_00281</name>
</gene>